<proteinExistence type="inferred from homology"/>
<dbReference type="EC" id="6.1.1.1" evidence="1"/>
<dbReference type="EMBL" id="CU469464">
    <property type="protein sequence ID" value="CAP18301.1"/>
    <property type="molecule type" value="Genomic_DNA"/>
</dbReference>
<dbReference type="SMR" id="B3R0D7"/>
<dbReference type="STRING" id="37692.ATP_00114"/>
<dbReference type="KEGG" id="pml:ATP_00114"/>
<dbReference type="eggNOG" id="COG0162">
    <property type="taxonomic scope" value="Bacteria"/>
</dbReference>
<dbReference type="HOGENOM" id="CLU_024003_0_2_14"/>
<dbReference type="Proteomes" id="UP000002020">
    <property type="component" value="Chromosome"/>
</dbReference>
<dbReference type="GO" id="GO:0005829">
    <property type="term" value="C:cytosol"/>
    <property type="evidence" value="ECO:0007669"/>
    <property type="project" value="TreeGrafter"/>
</dbReference>
<dbReference type="GO" id="GO:0005524">
    <property type="term" value="F:ATP binding"/>
    <property type="evidence" value="ECO:0007669"/>
    <property type="project" value="UniProtKB-UniRule"/>
</dbReference>
<dbReference type="GO" id="GO:0003723">
    <property type="term" value="F:RNA binding"/>
    <property type="evidence" value="ECO:0007669"/>
    <property type="project" value="UniProtKB-KW"/>
</dbReference>
<dbReference type="GO" id="GO:0004831">
    <property type="term" value="F:tyrosine-tRNA ligase activity"/>
    <property type="evidence" value="ECO:0007669"/>
    <property type="project" value="UniProtKB-UniRule"/>
</dbReference>
<dbReference type="GO" id="GO:0006437">
    <property type="term" value="P:tyrosyl-tRNA aminoacylation"/>
    <property type="evidence" value="ECO:0007669"/>
    <property type="project" value="UniProtKB-UniRule"/>
</dbReference>
<dbReference type="CDD" id="cd00805">
    <property type="entry name" value="TyrRS_core"/>
    <property type="match status" value="1"/>
</dbReference>
<dbReference type="FunFam" id="1.10.240.10:FF:000001">
    <property type="entry name" value="Tyrosine--tRNA ligase"/>
    <property type="match status" value="1"/>
</dbReference>
<dbReference type="Gene3D" id="3.40.50.620">
    <property type="entry name" value="HUPs"/>
    <property type="match status" value="1"/>
</dbReference>
<dbReference type="Gene3D" id="3.10.290.10">
    <property type="entry name" value="RNA-binding S4 domain"/>
    <property type="match status" value="1"/>
</dbReference>
<dbReference type="Gene3D" id="1.10.240.10">
    <property type="entry name" value="Tyrosyl-Transfer RNA Synthetase"/>
    <property type="match status" value="1"/>
</dbReference>
<dbReference type="HAMAP" id="MF_02006">
    <property type="entry name" value="Tyr_tRNA_synth_type1"/>
    <property type="match status" value="1"/>
</dbReference>
<dbReference type="InterPro" id="IPR002305">
    <property type="entry name" value="aa-tRNA-synth_Ic"/>
</dbReference>
<dbReference type="InterPro" id="IPR014729">
    <property type="entry name" value="Rossmann-like_a/b/a_fold"/>
</dbReference>
<dbReference type="InterPro" id="IPR036986">
    <property type="entry name" value="S4_RNA-bd_sf"/>
</dbReference>
<dbReference type="InterPro" id="IPR054608">
    <property type="entry name" value="SYY-like_C"/>
</dbReference>
<dbReference type="InterPro" id="IPR002307">
    <property type="entry name" value="Tyr-tRNA-ligase"/>
</dbReference>
<dbReference type="InterPro" id="IPR024088">
    <property type="entry name" value="Tyr-tRNA-ligase_bac-type"/>
</dbReference>
<dbReference type="InterPro" id="IPR024107">
    <property type="entry name" value="Tyr-tRNA-ligase_bac_1"/>
</dbReference>
<dbReference type="NCBIfam" id="TIGR00234">
    <property type="entry name" value="tyrS"/>
    <property type="match status" value="1"/>
</dbReference>
<dbReference type="PANTHER" id="PTHR11766:SF0">
    <property type="entry name" value="TYROSINE--TRNA LIGASE, MITOCHONDRIAL"/>
    <property type="match status" value="1"/>
</dbReference>
<dbReference type="PANTHER" id="PTHR11766">
    <property type="entry name" value="TYROSYL-TRNA SYNTHETASE"/>
    <property type="match status" value="1"/>
</dbReference>
<dbReference type="Pfam" id="PF22421">
    <property type="entry name" value="SYY_C-terminal"/>
    <property type="match status" value="1"/>
</dbReference>
<dbReference type="Pfam" id="PF00579">
    <property type="entry name" value="tRNA-synt_1b"/>
    <property type="match status" value="1"/>
</dbReference>
<dbReference type="PRINTS" id="PR01040">
    <property type="entry name" value="TRNASYNTHTYR"/>
</dbReference>
<dbReference type="SUPFAM" id="SSF55174">
    <property type="entry name" value="Alpha-L RNA-binding motif"/>
    <property type="match status" value="1"/>
</dbReference>
<dbReference type="SUPFAM" id="SSF52374">
    <property type="entry name" value="Nucleotidylyl transferase"/>
    <property type="match status" value="1"/>
</dbReference>
<name>SYY_PHYMT</name>
<organism>
    <name type="scientific">Phytoplasma mali (strain AT)</name>
    <dbReference type="NCBI Taxonomy" id="482235"/>
    <lineage>
        <taxon>Bacteria</taxon>
        <taxon>Bacillati</taxon>
        <taxon>Mycoplasmatota</taxon>
        <taxon>Mollicutes</taxon>
        <taxon>Acholeplasmatales</taxon>
        <taxon>Acholeplasmataceae</taxon>
        <taxon>Candidatus Phytoplasma</taxon>
        <taxon>16SrX (Apple proliferation group)</taxon>
    </lineage>
</organism>
<comment type="function">
    <text evidence="1">Catalyzes the attachment of tyrosine to tRNA(Tyr) in a two-step reaction: tyrosine is first activated by ATP to form Tyr-AMP and then transferred to the acceptor end of tRNA(Tyr).</text>
</comment>
<comment type="catalytic activity">
    <reaction evidence="1">
        <text>tRNA(Tyr) + L-tyrosine + ATP = L-tyrosyl-tRNA(Tyr) + AMP + diphosphate + H(+)</text>
        <dbReference type="Rhea" id="RHEA:10220"/>
        <dbReference type="Rhea" id="RHEA-COMP:9706"/>
        <dbReference type="Rhea" id="RHEA-COMP:9707"/>
        <dbReference type="ChEBI" id="CHEBI:15378"/>
        <dbReference type="ChEBI" id="CHEBI:30616"/>
        <dbReference type="ChEBI" id="CHEBI:33019"/>
        <dbReference type="ChEBI" id="CHEBI:58315"/>
        <dbReference type="ChEBI" id="CHEBI:78442"/>
        <dbReference type="ChEBI" id="CHEBI:78536"/>
        <dbReference type="ChEBI" id="CHEBI:456215"/>
        <dbReference type="EC" id="6.1.1.1"/>
    </reaction>
</comment>
<comment type="subunit">
    <text evidence="1">Homodimer.</text>
</comment>
<comment type="subcellular location">
    <subcellularLocation>
        <location evidence="1">Cytoplasm</location>
    </subcellularLocation>
</comment>
<comment type="similarity">
    <text evidence="1">Belongs to the class-I aminoacyl-tRNA synthetase family. TyrS type 1 subfamily.</text>
</comment>
<evidence type="ECO:0000255" key="1">
    <source>
        <dbReference type="HAMAP-Rule" id="MF_02006"/>
    </source>
</evidence>
<gene>
    <name evidence="1" type="primary">tyrS</name>
    <name type="ordered locus">ATP_00114</name>
</gene>
<keyword id="KW-0030">Aminoacyl-tRNA synthetase</keyword>
<keyword id="KW-0067">ATP-binding</keyword>
<keyword id="KW-0963">Cytoplasm</keyword>
<keyword id="KW-0436">Ligase</keyword>
<keyword id="KW-0547">Nucleotide-binding</keyword>
<keyword id="KW-0648">Protein biosynthesis</keyword>
<keyword id="KW-1185">Reference proteome</keyword>
<keyword id="KW-0694">RNA-binding</keyword>
<accession>B3R0D7</accession>
<feature type="chain" id="PRO_1000189317" description="Tyrosine--tRNA ligase">
    <location>
        <begin position="1"/>
        <end position="417"/>
    </location>
</feature>
<feature type="domain" description="S4 RNA-binding" evidence="1">
    <location>
        <begin position="350"/>
        <end position="416"/>
    </location>
</feature>
<feature type="short sequence motif" description="'HIGH' region">
    <location>
        <begin position="40"/>
        <end position="49"/>
    </location>
</feature>
<feature type="short sequence motif" description="'KMSKS' region">
    <location>
        <begin position="229"/>
        <end position="233"/>
    </location>
</feature>
<feature type="binding site" evidence="1">
    <location>
        <position position="35"/>
    </location>
    <ligand>
        <name>L-tyrosine</name>
        <dbReference type="ChEBI" id="CHEBI:58315"/>
    </ligand>
</feature>
<feature type="binding site" evidence="1">
    <location>
        <position position="165"/>
    </location>
    <ligand>
        <name>L-tyrosine</name>
        <dbReference type="ChEBI" id="CHEBI:58315"/>
    </ligand>
</feature>
<feature type="binding site" evidence="1">
    <location>
        <position position="169"/>
    </location>
    <ligand>
        <name>L-tyrosine</name>
        <dbReference type="ChEBI" id="CHEBI:58315"/>
    </ligand>
</feature>
<feature type="binding site" evidence="1">
    <location>
        <position position="232"/>
    </location>
    <ligand>
        <name>ATP</name>
        <dbReference type="ChEBI" id="CHEBI:30616"/>
    </ligand>
</feature>
<reference key="1">
    <citation type="journal article" date="2008" name="BMC Genomics">
        <title>The linear chromosome of the plant-pathogenic mycoplasma 'Candidatus Phytoplasma mali'.</title>
        <authorList>
            <person name="Kube M."/>
            <person name="Schneider B."/>
            <person name="Kuhl H."/>
            <person name="Dandekar T."/>
            <person name="Heitmann K."/>
            <person name="Migdoll A.M."/>
            <person name="Reinhardt R."/>
            <person name="Seemueller E."/>
        </authorList>
    </citation>
    <scope>NUCLEOTIDE SEQUENCE [LARGE SCALE GENOMIC DNA]</scope>
    <source>
        <strain>AT</strain>
    </source>
</reference>
<protein>
    <recommendedName>
        <fullName evidence="1">Tyrosine--tRNA ligase</fullName>
        <ecNumber evidence="1">6.1.1.1</ecNumber>
    </recommendedName>
    <alternativeName>
        <fullName evidence="1">Tyrosyl-tRNA synthetase</fullName>
        <shortName evidence="1">TyrRS</shortName>
    </alternativeName>
</protein>
<sequence length="417" mass="48282">MSLFEELKWRNLITECSDEKRAKLLLDGNKKIKFYCGFDATAGSLTVGHLVQIITFLLIQKKGHFPIVLLGGATSFIGDPKKIEERKLLDPSQILDNFNKISLQFKKILSFISFEIVNNYDWISKIDVINFLRKYGKLFNINYMLSKEVIANRLKKGLSYAEFSYMVLQSLDFQYLFEHKNVIMQFGGSDQWGNITSGLELIRKINKIKDNDKPVGMTNALLLKSDGTKFGKSEDGVLWLDQKLTSPYKIYQYFLNTEDKEVVNYLKSLTLLSKKEIINLKEENIVNPQKRLAQKILAKEIITLIHGKKIFENCFNTNQALFVGKKDQLSEQSFYFLKYTLNYIEVNDKISLLEALVFTKLTNSKNKAKELISNHAIKIFDQIVDDTELILNIKHSLFNKYILLKKGKRFNALIIFK</sequence>